<proteinExistence type="inferred from homology"/>
<dbReference type="EC" id="2.1.2.10" evidence="1"/>
<dbReference type="EMBL" id="CP000813">
    <property type="protein sequence ID" value="ABV62858.1"/>
    <property type="molecule type" value="Genomic_DNA"/>
</dbReference>
<dbReference type="RefSeq" id="WP_012010552.1">
    <property type="nucleotide sequence ID" value="NC_009848.4"/>
</dbReference>
<dbReference type="SMR" id="A8FF41"/>
<dbReference type="STRING" id="315750.BPUM_2189"/>
<dbReference type="GeneID" id="5621455"/>
<dbReference type="KEGG" id="bpu:BPUM_2189"/>
<dbReference type="eggNOG" id="COG0404">
    <property type="taxonomic scope" value="Bacteria"/>
</dbReference>
<dbReference type="HOGENOM" id="CLU_007884_10_2_9"/>
<dbReference type="OrthoDB" id="9774591at2"/>
<dbReference type="Proteomes" id="UP000001355">
    <property type="component" value="Chromosome"/>
</dbReference>
<dbReference type="GO" id="GO:0005829">
    <property type="term" value="C:cytosol"/>
    <property type="evidence" value="ECO:0007669"/>
    <property type="project" value="TreeGrafter"/>
</dbReference>
<dbReference type="GO" id="GO:0005960">
    <property type="term" value="C:glycine cleavage complex"/>
    <property type="evidence" value="ECO:0007669"/>
    <property type="project" value="InterPro"/>
</dbReference>
<dbReference type="GO" id="GO:0004047">
    <property type="term" value="F:aminomethyltransferase activity"/>
    <property type="evidence" value="ECO:0007669"/>
    <property type="project" value="UniProtKB-UniRule"/>
</dbReference>
<dbReference type="GO" id="GO:0008483">
    <property type="term" value="F:transaminase activity"/>
    <property type="evidence" value="ECO:0007669"/>
    <property type="project" value="UniProtKB-KW"/>
</dbReference>
<dbReference type="GO" id="GO:0019464">
    <property type="term" value="P:glycine decarboxylation via glycine cleavage system"/>
    <property type="evidence" value="ECO:0007669"/>
    <property type="project" value="UniProtKB-UniRule"/>
</dbReference>
<dbReference type="FunFam" id="2.40.30.110:FF:000003">
    <property type="entry name" value="Aminomethyltransferase"/>
    <property type="match status" value="1"/>
</dbReference>
<dbReference type="FunFam" id="3.30.70.1400:FF:000001">
    <property type="entry name" value="Aminomethyltransferase"/>
    <property type="match status" value="1"/>
</dbReference>
<dbReference type="FunFam" id="4.10.1250.10:FF:000001">
    <property type="entry name" value="Aminomethyltransferase"/>
    <property type="match status" value="1"/>
</dbReference>
<dbReference type="Gene3D" id="2.40.30.110">
    <property type="entry name" value="Aminomethyltransferase beta-barrel domains"/>
    <property type="match status" value="1"/>
</dbReference>
<dbReference type="Gene3D" id="3.30.70.1400">
    <property type="entry name" value="Aminomethyltransferase beta-barrel domains"/>
    <property type="match status" value="1"/>
</dbReference>
<dbReference type="Gene3D" id="4.10.1250.10">
    <property type="entry name" value="Aminomethyltransferase fragment"/>
    <property type="match status" value="1"/>
</dbReference>
<dbReference type="Gene3D" id="3.30.1360.120">
    <property type="entry name" value="Probable tRNA modification gtpase trme, domain 1"/>
    <property type="match status" value="1"/>
</dbReference>
<dbReference type="HAMAP" id="MF_00259">
    <property type="entry name" value="GcvT"/>
    <property type="match status" value="1"/>
</dbReference>
<dbReference type="InterPro" id="IPR006223">
    <property type="entry name" value="GCS_T"/>
</dbReference>
<dbReference type="InterPro" id="IPR022903">
    <property type="entry name" value="GCS_T_bac"/>
</dbReference>
<dbReference type="InterPro" id="IPR013977">
    <property type="entry name" value="GCST_C"/>
</dbReference>
<dbReference type="InterPro" id="IPR006222">
    <property type="entry name" value="GCV_T_N"/>
</dbReference>
<dbReference type="InterPro" id="IPR028896">
    <property type="entry name" value="GcvT/YgfZ/DmdA"/>
</dbReference>
<dbReference type="InterPro" id="IPR029043">
    <property type="entry name" value="GcvT/YgfZ_C"/>
</dbReference>
<dbReference type="InterPro" id="IPR027266">
    <property type="entry name" value="TrmE/GcvT_dom1"/>
</dbReference>
<dbReference type="NCBIfam" id="TIGR00528">
    <property type="entry name" value="gcvT"/>
    <property type="match status" value="1"/>
</dbReference>
<dbReference type="NCBIfam" id="NF001567">
    <property type="entry name" value="PRK00389.1"/>
    <property type="match status" value="1"/>
</dbReference>
<dbReference type="PANTHER" id="PTHR43757">
    <property type="entry name" value="AMINOMETHYLTRANSFERASE"/>
    <property type="match status" value="1"/>
</dbReference>
<dbReference type="PANTHER" id="PTHR43757:SF2">
    <property type="entry name" value="AMINOMETHYLTRANSFERASE, MITOCHONDRIAL"/>
    <property type="match status" value="1"/>
</dbReference>
<dbReference type="Pfam" id="PF01571">
    <property type="entry name" value="GCV_T"/>
    <property type="match status" value="1"/>
</dbReference>
<dbReference type="Pfam" id="PF08669">
    <property type="entry name" value="GCV_T_C"/>
    <property type="match status" value="1"/>
</dbReference>
<dbReference type="PIRSF" id="PIRSF006487">
    <property type="entry name" value="GcvT"/>
    <property type="match status" value="1"/>
</dbReference>
<dbReference type="SUPFAM" id="SSF101790">
    <property type="entry name" value="Aminomethyltransferase beta-barrel domain"/>
    <property type="match status" value="1"/>
</dbReference>
<dbReference type="SUPFAM" id="SSF103025">
    <property type="entry name" value="Folate-binding domain"/>
    <property type="match status" value="1"/>
</dbReference>
<sequence length="365" mass="40306">MLKRTPLFHAYETFGAKTIDFGGWELPVQFSSIKEEHEAVRTKAGLFDVSHMGEVEIKGQDALPFLQRLLTNDVSKLTDGKALYTAMCYEDGGTVDDLLVYQKEKNDYLLVINASNIEKDVEWLLQHQGENDVLIQNVSDEIALLALQGPLAADIMKDVADEEVTSLKPFTFLSKAEVAQKEVLVSRTGYTGEDGFEIYCQSEDAVHIWSALLKVGAPKGLIPCGLGARDTLRFEARLPLYGQELTKDISPLEGGIGFAVKTDKEANFIGKEALKKQKEEGPKRKLVGIEMIDKGIPRTDYPVFSGEKQIGVVTTGTQSPTLKKNVGLALIESSQAQLGTVVEVQVRKKRLKAKIVATPFYKRAK</sequence>
<evidence type="ECO:0000255" key="1">
    <source>
        <dbReference type="HAMAP-Rule" id="MF_00259"/>
    </source>
</evidence>
<keyword id="KW-0032">Aminotransferase</keyword>
<keyword id="KW-0808">Transferase</keyword>
<organism>
    <name type="scientific">Bacillus pumilus (strain SAFR-032)</name>
    <dbReference type="NCBI Taxonomy" id="315750"/>
    <lineage>
        <taxon>Bacteria</taxon>
        <taxon>Bacillati</taxon>
        <taxon>Bacillota</taxon>
        <taxon>Bacilli</taxon>
        <taxon>Bacillales</taxon>
        <taxon>Bacillaceae</taxon>
        <taxon>Bacillus</taxon>
    </lineage>
</organism>
<gene>
    <name evidence="1" type="primary">gcvT</name>
    <name type="ordered locus">BPUM_2189</name>
</gene>
<feature type="chain" id="PRO_1000059081" description="Aminomethyltransferase">
    <location>
        <begin position="1"/>
        <end position="365"/>
    </location>
</feature>
<accession>A8FF41</accession>
<reference key="1">
    <citation type="journal article" date="2007" name="PLoS ONE">
        <title>Paradoxical DNA repair and peroxide resistance gene conservation in Bacillus pumilus SAFR-032.</title>
        <authorList>
            <person name="Gioia J."/>
            <person name="Yerrapragada S."/>
            <person name="Qin X."/>
            <person name="Jiang H."/>
            <person name="Igboeli O.C."/>
            <person name="Muzny D."/>
            <person name="Dugan-Rocha S."/>
            <person name="Ding Y."/>
            <person name="Hawes A."/>
            <person name="Liu W."/>
            <person name="Perez L."/>
            <person name="Kovar C."/>
            <person name="Dinh H."/>
            <person name="Lee S."/>
            <person name="Nazareth L."/>
            <person name="Blyth P."/>
            <person name="Holder M."/>
            <person name="Buhay C."/>
            <person name="Tirumalai M.R."/>
            <person name="Liu Y."/>
            <person name="Dasgupta I."/>
            <person name="Bokhetache L."/>
            <person name="Fujita M."/>
            <person name="Karouia F."/>
            <person name="Eswara Moorthy P."/>
            <person name="Siefert J."/>
            <person name="Uzman A."/>
            <person name="Buzumbo P."/>
            <person name="Verma A."/>
            <person name="Zwiya H."/>
            <person name="McWilliams B.D."/>
            <person name="Olowu A."/>
            <person name="Clinkenbeard K.D."/>
            <person name="Newcombe D."/>
            <person name="Golebiewski L."/>
            <person name="Petrosino J.F."/>
            <person name="Nicholson W.L."/>
            <person name="Fox G.E."/>
            <person name="Venkateswaran K."/>
            <person name="Highlander S.K."/>
            <person name="Weinstock G.M."/>
        </authorList>
    </citation>
    <scope>NUCLEOTIDE SEQUENCE [LARGE SCALE GENOMIC DNA]</scope>
    <source>
        <strain>SAFR-032</strain>
    </source>
</reference>
<comment type="function">
    <text evidence="1">The glycine cleavage system catalyzes the degradation of glycine.</text>
</comment>
<comment type="catalytic activity">
    <reaction evidence="1">
        <text>N(6)-[(R)-S(8)-aminomethyldihydrolipoyl]-L-lysyl-[protein] + (6S)-5,6,7,8-tetrahydrofolate = N(6)-[(R)-dihydrolipoyl]-L-lysyl-[protein] + (6R)-5,10-methylene-5,6,7,8-tetrahydrofolate + NH4(+)</text>
        <dbReference type="Rhea" id="RHEA:16945"/>
        <dbReference type="Rhea" id="RHEA-COMP:10475"/>
        <dbReference type="Rhea" id="RHEA-COMP:10492"/>
        <dbReference type="ChEBI" id="CHEBI:15636"/>
        <dbReference type="ChEBI" id="CHEBI:28938"/>
        <dbReference type="ChEBI" id="CHEBI:57453"/>
        <dbReference type="ChEBI" id="CHEBI:83100"/>
        <dbReference type="ChEBI" id="CHEBI:83143"/>
        <dbReference type="EC" id="2.1.2.10"/>
    </reaction>
</comment>
<comment type="subunit">
    <text evidence="1">The glycine cleavage system is composed of four proteins: P, T, L and H.</text>
</comment>
<comment type="similarity">
    <text evidence="1">Belongs to the GcvT family.</text>
</comment>
<protein>
    <recommendedName>
        <fullName evidence="1">Aminomethyltransferase</fullName>
        <ecNumber evidence="1">2.1.2.10</ecNumber>
    </recommendedName>
    <alternativeName>
        <fullName evidence="1">Glycine cleavage system T protein</fullName>
    </alternativeName>
</protein>
<name>GCST_BACP2</name>